<organism>
    <name type="scientific">Mus musculus</name>
    <name type="common">Mouse</name>
    <dbReference type="NCBI Taxonomy" id="10090"/>
    <lineage>
        <taxon>Eukaryota</taxon>
        <taxon>Metazoa</taxon>
        <taxon>Chordata</taxon>
        <taxon>Craniata</taxon>
        <taxon>Vertebrata</taxon>
        <taxon>Euteleostomi</taxon>
        <taxon>Mammalia</taxon>
        <taxon>Eutheria</taxon>
        <taxon>Euarchontoglires</taxon>
        <taxon>Glires</taxon>
        <taxon>Rodentia</taxon>
        <taxon>Myomorpha</taxon>
        <taxon>Muroidea</taxon>
        <taxon>Muridae</taxon>
        <taxon>Murinae</taxon>
        <taxon>Mus</taxon>
        <taxon>Mus</taxon>
    </lineage>
</organism>
<evidence type="ECO:0000250" key="1"/>
<evidence type="ECO:0000250" key="2">
    <source>
        <dbReference type="UniProtKB" id="P63165"/>
    </source>
</evidence>
<evidence type="ECO:0000255" key="3">
    <source>
        <dbReference type="PROSITE-ProRule" id="PRU00214"/>
    </source>
</evidence>
<evidence type="ECO:0000269" key="4">
    <source>
    </source>
</evidence>
<evidence type="ECO:0000269" key="5">
    <source>
    </source>
</evidence>
<evidence type="ECO:0000269" key="6">
    <source>
    </source>
</evidence>
<evidence type="ECO:0000269" key="7">
    <source>
    </source>
</evidence>
<evidence type="ECO:0000305" key="8"/>
<evidence type="ECO:0007744" key="9">
    <source>
    </source>
</evidence>
<name>SUMO1_MOUSE</name>
<feature type="initiator methionine" description="Removed" evidence="2">
    <location>
        <position position="1"/>
    </location>
</feature>
<feature type="chain" id="PRO_0000035941" description="Small ubiquitin-related modifier 1">
    <location>
        <begin position="2"/>
        <end position="97"/>
    </location>
</feature>
<feature type="propeptide" id="PRO_0000035942" evidence="1">
    <location>
        <begin position="98"/>
        <end position="101"/>
    </location>
</feature>
<feature type="domain" description="Ubiquitin-like" evidence="3">
    <location>
        <begin position="20"/>
        <end position="97"/>
    </location>
</feature>
<feature type="site" description="Interaction with PIAS2" evidence="1">
    <location>
        <position position="36"/>
    </location>
</feature>
<feature type="modified residue" description="N-acetylserine" evidence="2">
    <location>
        <position position="2"/>
    </location>
</feature>
<feature type="modified residue" description="Phosphoserine" evidence="9">
    <location>
        <position position="2"/>
    </location>
</feature>
<feature type="modified residue" description="Phosphoserine" evidence="2">
    <location>
        <position position="9"/>
    </location>
</feature>
<feature type="modified residue" description="Phosphoserine" evidence="2">
    <location>
        <position position="32"/>
    </location>
</feature>
<feature type="cross-link" description="Glycyl lysine isopeptide (Lys-Gly) (interchain with G-Cter in SUMO1); alternate" evidence="2">
    <location>
        <position position="7"/>
    </location>
</feature>
<feature type="cross-link" description="Glycyl lysine isopeptide (Lys-Gly) (interchain with G-Cter in SUMO2); alternate" evidence="2">
    <location>
        <position position="7"/>
    </location>
</feature>
<feature type="cross-link" description="Glycyl lysine isopeptide (Lys-Gly) (interchain with G-Cter in SUMO2)" evidence="2">
    <location>
        <position position="16"/>
    </location>
</feature>
<feature type="cross-link" description="Glycyl lysine isopeptide (Lys-Gly) (interchain with G-Cter in SUMO2)" evidence="2">
    <location>
        <position position="17"/>
    </location>
</feature>
<feature type="cross-link" description="Glycyl lysine isopeptide (Lys-Gly) (interchain with G-Cter in SUMO2)" evidence="2">
    <location>
        <position position="23"/>
    </location>
</feature>
<feature type="cross-link" description="Glycyl lysine isopeptide (Lys-Gly) (interchain with G-Cter in SUMO1)" evidence="2">
    <location>
        <position position="25"/>
    </location>
</feature>
<feature type="cross-link" description="Glycyl lysine isopeptide (Lys-Gly) (interchain with G-Cter in SUMO2)" evidence="2">
    <location>
        <position position="37"/>
    </location>
</feature>
<feature type="cross-link" description="Glycyl lysine isopeptide (Lys-Gly) (interchain with G-Cter in SUMO2)" evidence="2">
    <location>
        <position position="39"/>
    </location>
</feature>
<feature type="cross-link" description="Glycyl lysine isopeptide (Lys-Gly) (interchain with G-Cter in SUMO2)" evidence="2">
    <location>
        <position position="45"/>
    </location>
</feature>
<feature type="cross-link" description="Glycyl lysine isopeptide (Lys-Gly) (interchain with G-Cter in SUMO2)" evidence="2">
    <location>
        <position position="46"/>
    </location>
</feature>
<feature type="cross-link" description="Glycyl lysine isopeptide (Gly-Lys) (interchain with K-? in acceptor proteins)">
    <location>
        <position position="97"/>
    </location>
</feature>
<reference key="1">
    <citation type="journal article" date="1998" name="Genomics">
        <title>The ubiquitin-homology gene PIC1: characterization of mouse (Pic1) and human (UBL1) genes and pseudogenes.</title>
        <authorList>
            <person name="Howe K."/>
            <person name="Williamson J."/>
            <person name="Boddy M.N."/>
            <person name="Sheer D."/>
            <person name="Freemont P.S."/>
            <person name="Solomon E."/>
        </authorList>
    </citation>
    <scope>NUCLEOTIDE SEQUENCE [MRNA]</scope>
    <source>
        <strain>ICR</strain>
    </source>
</reference>
<reference key="2">
    <citation type="journal article" date="2005" name="Science">
        <title>The transcriptional landscape of the mammalian genome.</title>
        <authorList>
            <person name="Carninci P."/>
            <person name="Kasukawa T."/>
            <person name="Katayama S."/>
            <person name="Gough J."/>
            <person name="Frith M.C."/>
            <person name="Maeda N."/>
            <person name="Oyama R."/>
            <person name="Ravasi T."/>
            <person name="Lenhard B."/>
            <person name="Wells C."/>
            <person name="Kodzius R."/>
            <person name="Shimokawa K."/>
            <person name="Bajic V.B."/>
            <person name="Brenner S.E."/>
            <person name="Batalov S."/>
            <person name="Forrest A.R."/>
            <person name="Zavolan M."/>
            <person name="Davis M.J."/>
            <person name="Wilming L.G."/>
            <person name="Aidinis V."/>
            <person name="Allen J.E."/>
            <person name="Ambesi-Impiombato A."/>
            <person name="Apweiler R."/>
            <person name="Aturaliya R.N."/>
            <person name="Bailey T.L."/>
            <person name="Bansal M."/>
            <person name="Baxter L."/>
            <person name="Beisel K.W."/>
            <person name="Bersano T."/>
            <person name="Bono H."/>
            <person name="Chalk A.M."/>
            <person name="Chiu K.P."/>
            <person name="Choudhary V."/>
            <person name="Christoffels A."/>
            <person name="Clutterbuck D.R."/>
            <person name="Crowe M.L."/>
            <person name="Dalla E."/>
            <person name="Dalrymple B.P."/>
            <person name="de Bono B."/>
            <person name="Della Gatta G."/>
            <person name="di Bernardo D."/>
            <person name="Down T."/>
            <person name="Engstrom P."/>
            <person name="Fagiolini M."/>
            <person name="Faulkner G."/>
            <person name="Fletcher C.F."/>
            <person name="Fukushima T."/>
            <person name="Furuno M."/>
            <person name="Futaki S."/>
            <person name="Gariboldi M."/>
            <person name="Georgii-Hemming P."/>
            <person name="Gingeras T.R."/>
            <person name="Gojobori T."/>
            <person name="Green R.E."/>
            <person name="Gustincich S."/>
            <person name="Harbers M."/>
            <person name="Hayashi Y."/>
            <person name="Hensch T.K."/>
            <person name="Hirokawa N."/>
            <person name="Hill D."/>
            <person name="Huminiecki L."/>
            <person name="Iacono M."/>
            <person name="Ikeo K."/>
            <person name="Iwama A."/>
            <person name="Ishikawa T."/>
            <person name="Jakt M."/>
            <person name="Kanapin A."/>
            <person name="Katoh M."/>
            <person name="Kawasawa Y."/>
            <person name="Kelso J."/>
            <person name="Kitamura H."/>
            <person name="Kitano H."/>
            <person name="Kollias G."/>
            <person name="Krishnan S.P."/>
            <person name="Kruger A."/>
            <person name="Kummerfeld S.K."/>
            <person name="Kurochkin I.V."/>
            <person name="Lareau L.F."/>
            <person name="Lazarevic D."/>
            <person name="Lipovich L."/>
            <person name="Liu J."/>
            <person name="Liuni S."/>
            <person name="McWilliam S."/>
            <person name="Madan Babu M."/>
            <person name="Madera M."/>
            <person name="Marchionni L."/>
            <person name="Matsuda H."/>
            <person name="Matsuzawa S."/>
            <person name="Miki H."/>
            <person name="Mignone F."/>
            <person name="Miyake S."/>
            <person name="Morris K."/>
            <person name="Mottagui-Tabar S."/>
            <person name="Mulder N."/>
            <person name="Nakano N."/>
            <person name="Nakauchi H."/>
            <person name="Ng P."/>
            <person name="Nilsson R."/>
            <person name="Nishiguchi S."/>
            <person name="Nishikawa S."/>
            <person name="Nori F."/>
            <person name="Ohara O."/>
            <person name="Okazaki Y."/>
            <person name="Orlando V."/>
            <person name="Pang K.C."/>
            <person name="Pavan W.J."/>
            <person name="Pavesi G."/>
            <person name="Pesole G."/>
            <person name="Petrovsky N."/>
            <person name="Piazza S."/>
            <person name="Reed J."/>
            <person name="Reid J.F."/>
            <person name="Ring B.Z."/>
            <person name="Ringwald M."/>
            <person name="Rost B."/>
            <person name="Ruan Y."/>
            <person name="Salzberg S.L."/>
            <person name="Sandelin A."/>
            <person name="Schneider C."/>
            <person name="Schoenbach C."/>
            <person name="Sekiguchi K."/>
            <person name="Semple C.A."/>
            <person name="Seno S."/>
            <person name="Sessa L."/>
            <person name="Sheng Y."/>
            <person name="Shibata Y."/>
            <person name="Shimada H."/>
            <person name="Shimada K."/>
            <person name="Silva D."/>
            <person name="Sinclair B."/>
            <person name="Sperling S."/>
            <person name="Stupka E."/>
            <person name="Sugiura K."/>
            <person name="Sultana R."/>
            <person name="Takenaka Y."/>
            <person name="Taki K."/>
            <person name="Tammoja K."/>
            <person name="Tan S.L."/>
            <person name="Tang S."/>
            <person name="Taylor M.S."/>
            <person name="Tegner J."/>
            <person name="Teichmann S.A."/>
            <person name="Ueda H.R."/>
            <person name="van Nimwegen E."/>
            <person name="Verardo R."/>
            <person name="Wei C.L."/>
            <person name="Yagi K."/>
            <person name="Yamanishi H."/>
            <person name="Zabarovsky E."/>
            <person name="Zhu S."/>
            <person name="Zimmer A."/>
            <person name="Hide W."/>
            <person name="Bult C."/>
            <person name="Grimmond S.M."/>
            <person name="Teasdale R.D."/>
            <person name="Liu E.T."/>
            <person name="Brusic V."/>
            <person name="Quackenbush J."/>
            <person name="Wahlestedt C."/>
            <person name="Mattick J.S."/>
            <person name="Hume D.A."/>
            <person name="Kai C."/>
            <person name="Sasaki D."/>
            <person name="Tomaru Y."/>
            <person name="Fukuda S."/>
            <person name="Kanamori-Katayama M."/>
            <person name="Suzuki M."/>
            <person name="Aoki J."/>
            <person name="Arakawa T."/>
            <person name="Iida J."/>
            <person name="Imamura K."/>
            <person name="Itoh M."/>
            <person name="Kato T."/>
            <person name="Kawaji H."/>
            <person name="Kawagashira N."/>
            <person name="Kawashima T."/>
            <person name="Kojima M."/>
            <person name="Kondo S."/>
            <person name="Konno H."/>
            <person name="Nakano K."/>
            <person name="Ninomiya N."/>
            <person name="Nishio T."/>
            <person name="Okada M."/>
            <person name="Plessy C."/>
            <person name="Shibata K."/>
            <person name="Shiraki T."/>
            <person name="Suzuki S."/>
            <person name="Tagami M."/>
            <person name="Waki K."/>
            <person name="Watahiki A."/>
            <person name="Okamura-Oho Y."/>
            <person name="Suzuki H."/>
            <person name="Kawai J."/>
            <person name="Hayashizaki Y."/>
        </authorList>
    </citation>
    <scope>NUCLEOTIDE SEQUENCE [LARGE SCALE MRNA]</scope>
    <source>
        <strain>C57BL/6J</strain>
        <strain>NOD</strain>
        <tissue>Kidney</tissue>
        <tissue>Liver</tissue>
        <tissue>Thymus</tissue>
    </source>
</reference>
<reference key="3">
    <citation type="journal article" date="2004" name="Genome Res.">
        <title>The status, quality, and expansion of the NIH full-length cDNA project: the Mammalian Gene Collection (MGC).</title>
        <authorList>
            <consortium name="The MGC Project Team"/>
        </authorList>
    </citation>
    <scope>NUCLEOTIDE SEQUENCE [LARGE SCALE MRNA]</scope>
    <source>
        <strain>C57BL/6J</strain>
        <strain>FVB/N</strain>
        <tissue>Colon</tissue>
        <tissue>Eye</tissue>
    </source>
</reference>
<reference key="4">
    <citation type="journal article" date="2004" name="FEBS Lett.">
        <title>Increase of SUMO-1 expression in response to hypoxia: direct interaction with HIF-1alpha in adult mouse brain and heart in vivo.</title>
        <authorList>
            <person name="Shao R."/>
            <person name="Zhang F.-P."/>
            <person name="Tian F."/>
            <person name="Anders Friberg P."/>
            <person name="Wang X."/>
            <person name="Sjoeland H."/>
            <person name="Billig H."/>
        </authorList>
    </citation>
    <scope>SUBCELLULAR LOCATION</scope>
    <scope>INDUCTION</scope>
    <scope>INTERACTION WITH HIF1A</scope>
</reference>
<reference key="5">
    <citation type="journal article" date="2005" name="Mol. Cell. Biol.">
        <title>Ikaros SUMOylation: switching out of repression.</title>
        <authorList>
            <person name="Gomez-del Arco P."/>
            <person name="Koipally J."/>
            <person name="Georgopoulos K."/>
        </authorList>
    </citation>
    <scope>INTERACTION WITH IKFZ1</scope>
</reference>
<reference key="6">
    <citation type="journal article" date="2006" name="Science">
        <title>SUMO1 haploinsufficiency leads to cleft lip and palate.</title>
        <authorList>
            <person name="Alkuraya F.S."/>
            <person name="Saadi I."/>
            <person name="Lund J.J."/>
            <person name="Turbe-Doan A."/>
            <person name="Morton C.C."/>
            <person name="Maas R.L."/>
        </authorList>
    </citation>
    <scope>FUNCTION</scope>
    <scope>DEVELOPMENTAL STAGE</scope>
</reference>
<reference key="7">
    <citation type="journal article" date="2008" name="Genes Cells">
        <title>BCL11A is a SUMOylated protein and recruits SUMO-conjugation enzymes in its nuclear body.</title>
        <authorList>
            <person name="Kuwata T."/>
            <person name="Nakamura T."/>
        </authorList>
    </citation>
    <scope>SUBCELLULAR LOCATION</scope>
</reference>
<reference key="8">
    <citation type="journal article" date="2009" name="Mol. Cell. Proteomics">
        <title>Large scale localization of protein phosphorylation by use of electron capture dissociation mass spectrometry.</title>
        <authorList>
            <person name="Sweet S.M."/>
            <person name="Bailey C.M."/>
            <person name="Cunningham D.L."/>
            <person name="Heath J.K."/>
            <person name="Cooper H.J."/>
        </authorList>
    </citation>
    <scope>PHOSPHORYLATION [LARGE SCALE ANALYSIS] AT SER-2</scope>
    <scope>IDENTIFICATION BY MASS SPECTROMETRY [LARGE SCALE ANALYSIS]</scope>
    <source>
        <tissue>Embryonic fibroblast</tissue>
    </source>
</reference>
<reference key="9">
    <citation type="journal article" date="2019" name="Antioxid. Redox Signal.">
        <title>The Axonal Motor Neuropathy-Related HINT1 Protein Is a Zinc- and Calmodulin-Regulated Cysteine SUMO Protease.</title>
        <authorList>
            <person name="Cortes-Montero E."/>
            <person name="Rodriguez-Munoz M."/>
            <person name="Sanchez-Blazquez P."/>
            <person name="Garzon J."/>
        </authorList>
    </citation>
    <scope>INTERACTION WITH HINT1</scope>
</reference>
<protein>
    <recommendedName>
        <fullName>Small ubiquitin-related modifier 1</fullName>
        <shortName>SUMO-1</shortName>
    </recommendedName>
    <alternativeName>
        <fullName>SMT3 homolog 3</fullName>
    </alternativeName>
    <alternativeName>
        <fullName>Ubiquitin-homology domain protein PIC1</fullName>
    </alternativeName>
    <alternativeName>
        <fullName>Ubiquitin-like protein SMT3C</fullName>
        <shortName>Smt3C</shortName>
    </alternativeName>
</protein>
<sequence length="101" mass="11557">MSDQEAKPSTEDLGDKKEGEYIKLKVIGQDSSEIHFKVKMTTHLKKLKESYCQRQGVPMNSLRFLFEGQRIADNHTPKELGMEEEDVIEVYQEQTGGHSTV</sequence>
<accession>P63166</accession>
<accession>P55856</accession>
<accession>Q3TX92</accession>
<accession>Q93068</accession>
<dbReference type="EMBL" id="AF033353">
    <property type="protein sequence ID" value="AAC39959.1"/>
    <property type="molecule type" value="mRNA"/>
</dbReference>
<dbReference type="EMBL" id="AK002536">
    <property type="protein sequence ID" value="BAB22172.1"/>
    <property type="molecule type" value="mRNA"/>
</dbReference>
<dbReference type="EMBL" id="AK011074">
    <property type="protein sequence ID" value="BAB27379.1"/>
    <property type="molecule type" value="mRNA"/>
</dbReference>
<dbReference type="EMBL" id="AK089081">
    <property type="protein sequence ID" value="BAC40739.1"/>
    <property type="molecule type" value="mRNA"/>
</dbReference>
<dbReference type="EMBL" id="AK159366">
    <property type="protein sequence ID" value="BAE35024.1"/>
    <property type="molecule type" value="mRNA"/>
</dbReference>
<dbReference type="EMBL" id="BC082566">
    <property type="protein sequence ID" value="AAH82566.1"/>
    <property type="molecule type" value="mRNA"/>
</dbReference>
<dbReference type="EMBL" id="BC083158">
    <property type="protein sequence ID" value="AAH83158.1"/>
    <property type="molecule type" value="mRNA"/>
</dbReference>
<dbReference type="CCDS" id="CCDS35586.1"/>
<dbReference type="RefSeq" id="NP_033486.1">
    <property type="nucleotide sequence ID" value="NM_009460.2"/>
</dbReference>
<dbReference type="BMRB" id="P63166"/>
<dbReference type="SMR" id="P63166"/>
<dbReference type="BioGRID" id="204420">
    <property type="interactions" value="16"/>
</dbReference>
<dbReference type="CORUM" id="P63166"/>
<dbReference type="DIP" id="DIP-29278N"/>
<dbReference type="FunCoup" id="P63166">
    <property type="interactions" value="2846"/>
</dbReference>
<dbReference type="IntAct" id="P63166">
    <property type="interactions" value="15"/>
</dbReference>
<dbReference type="MINT" id="P63166"/>
<dbReference type="STRING" id="10090.ENSMUSP00000088935"/>
<dbReference type="ChEMBL" id="CHEMBL4879447"/>
<dbReference type="GlyGen" id="P63166">
    <property type="glycosylation" value="1 site, 1 O-linked glycan (1 site)"/>
</dbReference>
<dbReference type="iPTMnet" id="P63166"/>
<dbReference type="PhosphoSitePlus" id="P63166"/>
<dbReference type="SwissPalm" id="P63166"/>
<dbReference type="jPOST" id="P63166"/>
<dbReference type="PaxDb" id="10090-ENSMUSP00000088935"/>
<dbReference type="PeptideAtlas" id="P63166"/>
<dbReference type="ProteomicsDB" id="257507"/>
<dbReference type="Pumba" id="P63166"/>
<dbReference type="Antibodypedia" id="3793">
    <property type="antibodies" value="1189 antibodies from 46 providers"/>
</dbReference>
<dbReference type="DNASU" id="22218"/>
<dbReference type="Ensembl" id="ENSMUST00000091374.9">
    <property type="protein sequence ID" value="ENSMUSP00000088935.3"/>
    <property type="gene ID" value="ENSMUSG00000026021.16"/>
</dbReference>
<dbReference type="GeneID" id="22218"/>
<dbReference type="KEGG" id="mmu:22218"/>
<dbReference type="UCSC" id="uc007bdx.1">
    <property type="organism name" value="mouse"/>
</dbReference>
<dbReference type="AGR" id="MGI:1197010"/>
<dbReference type="CTD" id="7341"/>
<dbReference type="MGI" id="MGI:1197010">
    <property type="gene designation" value="Sumo1"/>
</dbReference>
<dbReference type="VEuPathDB" id="HostDB:ENSMUSG00000026021"/>
<dbReference type="eggNOG" id="KOG1769">
    <property type="taxonomic scope" value="Eukaryota"/>
</dbReference>
<dbReference type="GeneTree" id="ENSGT00940000154319"/>
<dbReference type="HOGENOM" id="CLU_148322_0_0_1"/>
<dbReference type="InParanoid" id="P63166"/>
<dbReference type="OMA" id="DQSHAAR"/>
<dbReference type="OrthoDB" id="66762at9989"/>
<dbReference type="PhylomeDB" id="P63166"/>
<dbReference type="TreeFam" id="TF315116"/>
<dbReference type="Reactome" id="R-MMU-3065676">
    <property type="pathway name" value="SUMO is conjugated to E1 (UBA2:SAE1)"/>
</dbReference>
<dbReference type="Reactome" id="R-MMU-3065678">
    <property type="pathway name" value="SUMO is transferred from E1 to E2 (UBE2I, UBC9)"/>
</dbReference>
<dbReference type="Reactome" id="R-MMU-3065679">
    <property type="pathway name" value="SUMO is proteolytically processed"/>
</dbReference>
<dbReference type="Reactome" id="R-MMU-3108214">
    <property type="pathway name" value="SUMOylation of DNA damage response and repair proteins"/>
</dbReference>
<dbReference type="Reactome" id="R-MMU-3232118">
    <property type="pathway name" value="SUMOylation of transcription factors"/>
</dbReference>
<dbReference type="Reactome" id="R-MMU-3232142">
    <property type="pathway name" value="SUMOylation of ubiquitinylation proteins"/>
</dbReference>
<dbReference type="Reactome" id="R-MMU-3899300">
    <property type="pathway name" value="SUMOylation of transcription cofactors"/>
</dbReference>
<dbReference type="Reactome" id="R-MMU-4085377">
    <property type="pathway name" value="SUMOylation of SUMOylation proteins"/>
</dbReference>
<dbReference type="Reactome" id="R-MMU-4090294">
    <property type="pathway name" value="SUMOylation of intracellular receptors"/>
</dbReference>
<dbReference type="Reactome" id="R-MMU-4551638">
    <property type="pathway name" value="SUMOylation of chromatin organization proteins"/>
</dbReference>
<dbReference type="Reactome" id="R-MMU-4570464">
    <property type="pathway name" value="SUMOylation of RNA binding proteins"/>
</dbReference>
<dbReference type="Reactome" id="R-MMU-4615885">
    <property type="pathway name" value="SUMOylation of DNA replication proteins"/>
</dbReference>
<dbReference type="Reactome" id="R-MMU-4655427">
    <property type="pathway name" value="SUMOylation of DNA methylation proteins"/>
</dbReference>
<dbReference type="Reactome" id="R-MMU-4755510">
    <property type="pathway name" value="SUMOylation of immune response proteins"/>
</dbReference>
<dbReference type="Reactome" id="R-MMU-5693565">
    <property type="pathway name" value="Recruitment and ATM-mediated phosphorylation of repair and signaling proteins at DNA double strand breaks"/>
</dbReference>
<dbReference type="Reactome" id="R-MMU-5696395">
    <property type="pathway name" value="Formation of Incision Complex in GG-NER"/>
</dbReference>
<dbReference type="Reactome" id="R-MMU-877312">
    <property type="pathway name" value="Regulation of IFNG signaling"/>
</dbReference>
<dbReference type="Reactome" id="R-MMU-8866904">
    <property type="pathway name" value="Negative regulation of activity of TFAP2 (AP-2) family transcription factors"/>
</dbReference>
<dbReference type="Reactome" id="R-MMU-9615933">
    <property type="pathway name" value="Postmitotic nuclear pore complex (NPC) reformation"/>
</dbReference>
<dbReference type="Reactome" id="R-MMU-9793242">
    <property type="pathway name" value="SUMOylation of nuclear envelope proteins"/>
</dbReference>
<dbReference type="Reactome" id="R-MMU-9856649">
    <property type="pathway name" value="Transcriptional and post-translational regulation of MITF-M expression and activity"/>
</dbReference>
<dbReference type="BioGRID-ORCS" id="22218">
    <property type="hits" value="4 hits in 75 CRISPR screens"/>
</dbReference>
<dbReference type="ChiTaRS" id="Sumo1">
    <property type="organism name" value="mouse"/>
</dbReference>
<dbReference type="PRO" id="PR:P63166"/>
<dbReference type="Proteomes" id="UP000000589">
    <property type="component" value="Chromosome 1"/>
</dbReference>
<dbReference type="RNAct" id="P63166">
    <property type="molecule type" value="protein"/>
</dbReference>
<dbReference type="Bgee" id="ENSMUSG00000026021">
    <property type="expression patterns" value="Expressed in blastoderm cell in morula and 72 other cell types or tissues"/>
</dbReference>
<dbReference type="ExpressionAtlas" id="P63166">
    <property type="expression patterns" value="baseline and differential"/>
</dbReference>
<dbReference type="GO" id="GO:0098978">
    <property type="term" value="C:glutamatergic synapse"/>
    <property type="evidence" value="ECO:0000314"/>
    <property type="project" value="SynGO"/>
</dbReference>
<dbReference type="GO" id="GO:0016604">
    <property type="term" value="C:nuclear body"/>
    <property type="evidence" value="ECO:0000314"/>
    <property type="project" value="UniProtKB"/>
</dbReference>
<dbReference type="GO" id="GO:0031965">
    <property type="term" value="C:nuclear membrane"/>
    <property type="evidence" value="ECO:0007669"/>
    <property type="project" value="UniProtKB-SubCell"/>
</dbReference>
<dbReference type="GO" id="GO:0016607">
    <property type="term" value="C:nuclear speck"/>
    <property type="evidence" value="ECO:0007669"/>
    <property type="project" value="UniProtKB-SubCell"/>
</dbReference>
<dbReference type="GO" id="GO:0097165">
    <property type="term" value="C:nuclear stress granule"/>
    <property type="evidence" value="ECO:0000250"/>
    <property type="project" value="UniProtKB"/>
</dbReference>
<dbReference type="GO" id="GO:0005730">
    <property type="term" value="C:nucleolus"/>
    <property type="evidence" value="ECO:0007669"/>
    <property type="project" value="Ensembl"/>
</dbReference>
<dbReference type="GO" id="GO:0005654">
    <property type="term" value="C:nucleoplasm"/>
    <property type="evidence" value="ECO:0000304"/>
    <property type="project" value="Reactome"/>
</dbReference>
<dbReference type="GO" id="GO:0005634">
    <property type="term" value="C:nucleus"/>
    <property type="evidence" value="ECO:0000314"/>
    <property type="project" value="MGI"/>
</dbReference>
<dbReference type="GO" id="GO:0005886">
    <property type="term" value="C:plasma membrane"/>
    <property type="evidence" value="ECO:0000250"/>
    <property type="project" value="UniProtKB"/>
</dbReference>
<dbReference type="GO" id="GO:0016605">
    <property type="term" value="C:PML body"/>
    <property type="evidence" value="ECO:0000250"/>
    <property type="project" value="UniProtKB"/>
</dbReference>
<dbReference type="GO" id="GO:0099524">
    <property type="term" value="C:postsynaptic cytosol"/>
    <property type="evidence" value="ECO:0000314"/>
    <property type="project" value="SynGO"/>
</dbReference>
<dbReference type="GO" id="GO:0099523">
    <property type="term" value="C:presynaptic cytosol"/>
    <property type="evidence" value="ECO:0000314"/>
    <property type="project" value="SynGO"/>
</dbReference>
<dbReference type="GO" id="GO:0008076">
    <property type="term" value="C:voltage-gated potassium channel complex"/>
    <property type="evidence" value="ECO:0007669"/>
    <property type="project" value="Ensembl"/>
</dbReference>
<dbReference type="GO" id="GO:0001741">
    <property type="term" value="C:XY body"/>
    <property type="evidence" value="ECO:0000314"/>
    <property type="project" value="MGI"/>
</dbReference>
<dbReference type="GO" id="GO:0015459">
    <property type="term" value="F:potassium channel regulator activity"/>
    <property type="evidence" value="ECO:0000250"/>
    <property type="project" value="UniProtKB"/>
</dbReference>
<dbReference type="GO" id="GO:0031386">
    <property type="term" value="F:protein tag activity"/>
    <property type="evidence" value="ECO:0007669"/>
    <property type="project" value="Ensembl"/>
</dbReference>
<dbReference type="GO" id="GO:0044388">
    <property type="term" value="F:small protein activating enzyme binding"/>
    <property type="evidence" value="ECO:0007669"/>
    <property type="project" value="Ensembl"/>
</dbReference>
<dbReference type="GO" id="GO:0008134">
    <property type="term" value="F:transcription factor binding"/>
    <property type="evidence" value="ECO:0000315"/>
    <property type="project" value="AgBase"/>
</dbReference>
<dbReference type="GO" id="GO:0141109">
    <property type="term" value="F:transporter activator activity"/>
    <property type="evidence" value="ECO:0000315"/>
    <property type="project" value="BHF-UCL"/>
</dbReference>
<dbReference type="GO" id="GO:0031625">
    <property type="term" value="F:ubiquitin protein ligase binding"/>
    <property type="evidence" value="ECO:0000250"/>
    <property type="project" value="UniProtKB"/>
</dbReference>
<dbReference type="GO" id="GO:1990381">
    <property type="term" value="F:ubiquitin-specific protease binding"/>
    <property type="evidence" value="ECO:0007669"/>
    <property type="project" value="Ensembl"/>
</dbReference>
<dbReference type="GO" id="GO:0071276">
    <property type="term" value="P:cellular response to cadmium ion"/>
    <property type="evidence" value="ECO:0000250"/>
    <property type="project" value="UniProtKB"/>
</dbReference>
<dbReference type="GO" id="GO:0034605">
    <property type="term" value="P:cellular response to heat"/>
    <property type="evidence" value="ECO:0000250"/>
    <property type="project" value="UniProtKB"/>
</dbReference>
<dbReference type="GO" id="GO:0045759">
    <property type="term" value="P:negative regulation of action potential"/>
    <property type="evidence" value="ECO:0000250"/>
    <property type="project" value="UniProtKB"/>
</dbReference>
<dbReference type="GO" id="GO:1902260">
    <property type="term" value="P:negative regulation of delayed rectifier potassium channel activity"/>
    <property type="evidence" value="ECO:0000250"/>
    <property type="project" value="UniProtKB"/>
</dbReference>
<dbReference type="GO" id="GO:0042308">
    <property type="term" value="P:negative regulation of protein import into nucleus"/>
    <property type="evidence" value="ECO:0007669"/>
    <property type="project" value="Ensembl"/>
</dbReference>
<dbReference type="GO" id="GO:0010621">
    <property type="term" value="P:negative regulation of transcription by transcription factor localization"/>
    <property type="evidence" value="ECO:0007669"/>
    <property type="project" value="Ensembl"/>
</dbReference>
<dbReference type="GO" id="GO:0030578">
    <property type="term" value="P:PML body organization"/>
    <property type="evidence" value="ECO:0000315"/>
    <property type="project" value="MGI"/>
</dbReference>
<dbReference type="GO" id="GO:0032436">
    <property type="term" value="P:positive regulation of proteasomal ubiquitin-dependent protein catabolic process"/>
    <property type="evidence" value="ECO:0007669"/>
    <property type="project" value="Ensembl"/>
</dbReference>
<dbReference type="GO" id="GO:0031334">
    <property type="term" value="P:positive regulation of protein-containing complex assembly"/>
    <property type="evidence" value="ECO:0007669"/>
    <property type="project" value="Ensembl"/>
</dbReference>
<dbReference type="GO" id="GO:0090204">
    <property type="term" value="P:protein localization to nuclear pore"/>
    <property type="evidence" value="ECO:0000315"/>
    <property type="project" value="MGI"/>
</dbReference>
<dbReference type="GO" id="GO:0050821">
    <property type="term" value="P:protein stabilization"/>
    <property type="evidence" value="ECO:0007669"/>
    <property type="project" value="Ensembl"/>
</dbReference>
<dbReference type="GO" id="GO:0016925">
    <property type="term" value="P:protein sumoylation"/>
    <property type="evidence" value="ECO:0000314"/>
    <property type="project" value="MGI"/>
</dbReference>
<dbReference type="GO" id="GO:1903169">
    <property type="term" value="P:regulation of calcium ion transmembrane transport"/>
    <property type="evidence" value="ECO:0000315"/>
    <property type="project" value="BHF-UCL"/>
</dbReference>
<dbReference type="GO" id="GO:0086004">
    <property type="term" value="P:regulation of cardiac muscle cell contraction"/>
    <property type="evidence" value="ECO:0000315"/>
    <property type="project" value="BHF-UCL"/>
</dbReference>
<dbReference type="GO" id="GO:0006355">
    <property type="term" value="P:regulation of DNA-templated transcription"/>
    <property type="evidence" value="ECO:0000314"/>
    <property type="project" value="MGI"/>
</dbReference>
<dbReference type="GO" id="GO:0031647">
    <property type="term" value="P:regulation of protein stability"/>
    <property type="evidence" value="ECO:0000315"/>
    <property type="project" value="BHF-UCL"/>
</dbReference>
<dbReference type="GO" id="GO:0060021">
    <property type="term" value="P:roof of mouth development"/>
    <property type="evidence" value="ECO:0000315"/>
    <property type="project" value="UniProtKB"/>
</dbReference>
<dbReference type="CDD" id="cd16114">
    <property type="entry name" value="Ubl_SUMO1"/>
    <property type="match status" value="1"/>
</dbReference>
<dbReference type="FunFam" id="3.10.20.90:FF:000092">
    <property type="entry name" value="Small ubiquitin-related modifier"/>
    <property type="match status" value="1"/>
</dbReference>
<dbReference type="Gene3D" id="3.10.20.90">
    <property type="entry name" value="Phosphatidylinositol 3-kinase Catalytic Subunit, Chain A, domain 1"/>
    <property type="match status" value="1"/>
</dbReference>
<dbReference type="InterPro" id="IPR022617">
    <property type="entry name" value="Rad60/SUMO-like_dom"/>
</dbReference>
<dbReference type="InterPro" id="IPR046332">
    <property type="entry name" value="SUMO1_Ubl"/>
</dbReference>
<dbReference type="InterPro" id="IPR000626">
    <property type="entry name" value="Ubiquitin-like_dom"/>
</dbReference>
<dbReference type="InterPro" id="IPR029071">
    <property type="entry name" value="Ubiquitin-like_domsf"/>
</dbReference>
<dbReference type="PANTHER" id="PTHR10562">
    <property type="entry name" value="SMALL UBIQUITIN-RELATED MODIFIER"/>
    <property type="match status" value="1"/>
</dbReference>
<dbReference type="Pfam" id="PF11976">
    <property type="entry name" value="Rad60-SLD"/>
    <property type="match status" value="1"/>
</dbReference>
<dbReference type="SMART" id="SM00213">
    <property type="entry name" value="UBQ"/>
    <property type="match status" value="1"/>
</dbReference>
<dbReference type="SUPFAM" id="SSF54236">
    <property type="entry name" value="Ubiquitin-like"/>
    <property type="match status" value="1"/>
</dbReference>
<dbReference type="PROSITE" id="PS50053">
    <property type="entry name" value="UBIQUITIN_2"/>
    <property type="match status" value="1"/>
</dbReference>
<proteinExistence type="evidence at protein level"/>
<keyword id="KW-0007">Acetylation</keyword>
<keyword id="KW-1003">Cell membrane</keyword>
<keyword id="KW-0963">Cytoplasm</keyword>
<keyword id="KW-1017">Isopeptide bond</keyword>
<keyword id="KW-0472">Membrane</keyword>
<keyword id="KW-0539">Nucleus</keyword>
<keyword id="KW-0597">Phosphoprotein</keyword>
<keyword id="KW-1185">Reference proteome</keyword>
<keyword id="KW-0346">Stress response</keyword>
<keyword id="KW-0832">Ubl conjugation</keyword>
<keyword id="KW-0833">Ubl conjugation pathway</keyword>
<gene>
    <name type="primary">Sumo1</name>
    <name type="synonym">Smt3c</name>
    <name type="synonym">Smt3h3</name>
    <name type="synonym">Ubl1</name>
</gene>
<comment type="function">
    <text evidence="2 5">Ubiquitin-like protein that can be covalently attached to proteins as a monomer or a lysine-linked polymer. Covalent attachment via an isopeptide bond to its substrates requires prior activation by the E1 complex SAE1-SAE2 and linkage to the E2 enzyme UBE2I, and can be promoted by E3 ligases such as PIAS1-4, RANBP2 or CBX4. This post-translational modification on lysine residues of proteins plays a crucial role in a number of cellular processes such as nuclear transport, DNA replication and repair, mitosis and signal transduction. Involved for instance in targeting RANGAP1 to the nuclear pore complex protein RANBP2. Covalently attached to the voltage-gated potassium channel KCNB1; this modulates the gating characteristics of KCNB1. Polymeric SUMO1 chains are also susceptible to polyubiquitination which functions as a signal for proteasomal degradation of modified proteins. May also regulate a network of genes involved in palate development. Covalently attached to ZFHX3 (By similarity).</text>
</comment>
<comment type="subunit">
    <text evidence="2 7">Covalently attached to KCNB1; UBE2I increases cross-linking with KCNB1 and PIAS1 decreases cross-links with KCNB1 (By similarity). Interacts with SAE2, RANBP2, PIAS1 and PIAS2 (By similarity). Interacts with PRKN (By similarity). Covalently attached to a number of proteins such as IKFZ1, PML, RANGAP1, HIPK2, SP100, p53, p73-alpha, MDM2, JUN, DNMT3B and TDG (By similarity). Also interacts with HIF1A, HIPK2, HIPK3, CHD3, EXOSC9, RAD51 and RAD52 (By similarity). Interacts with USP25 (via ts SIM domain); the interaction weakly sumoylates USP25 (By similarity). Interacts with SIMC1, CASP8AP2, RNF111 and SOBP (via SIM domains) (By similarity). Interacts with BHLHE40/DEC1 (By similarity). Interacts with RWDD3 (By similarity). Interacts with UBE2I/UBC9 and this interaction is enhanced in the presence of RWDD3 (By similarity). Interacts with MTA1 (By similarity). Interacts with SENP2 (By similarity). Interacts with HINT1 (PubMed:31088288).</text>
</comment>
<comment type="interaction">
    <interactant intactId="EBI-80152">
        <id>P63166</id>
    </interactant>
    <interactant intactId="EBI-908572">
        <id>Q03267</id>
        <label>Ikzf1</label>
    </interactant>
    <organismsDiffer>false</organismsDiffer>
    <experiments>2</experiments>
</comment>
<comment type="interaction">
    <interactant intactId="EBI-80152">
        <id>P63166</id>
    </interactant>
    <interactant intactId="EBI-15617004">
        <id>Q505F1</id>
        <label>Nr2c1</label>
    </interactant>
    <organismsDiffer>false</organismsDiffer>
    <experiments>5</experiments>
</comment>
<comment type="interaction">
    <interactant intactId="EBI-80152">
        <id>P63166</id>
    </interactant>
    <interactant intactId="EBI-1395428">
        <id>P63015</id>
        <label>Pax6</label>
    </interactant>
    <organismsDiffer>false</organismsDiffer>
    <experiments>2</experiments>
</comment>
<comment type="interaction">
    <interactant intactId="EBI-80152">
        <id>P63166</id>
    </interactant>
    <interactant intactId="EBI-15892945">
        <id>P26367-1</id>
        <label>PAX6</label>
    </interactant>
    <organismsDiffer>true</organismsDiffer>
    <experiments>2</experiments>
</comment>
<comment type="interaction">
    <interactant intactId="EBI-80152">
        <id>P63166</id>
    </interactant>
    <interactant intactId="EBI-968788">
        <id>P18031</id>
        <label>PTPN1</label>
    </interactant>
    <organismsDiffer>true</organismsDiffer>
    <experiments>2</experiments>
</comment>
<comment type="subcellular location">
    <subcellularLocation>
        <location evidence="2">Nucleus membrane</location>
    </subcellularLocation>
    <subcellularLocation>
        <location evidence="6">Nucleus speckle</location>
    </subcellularLocation>
    <subcellularLocation>
        <location evidence="2">Cytoplasm</location>
    </subcellularLocation>
    <subcellularLocation>
        <location evidence="2">Nucleus</location>
        <location evidence="2">PML body</location>
    </subcellularLocation>
    <subcellularLocation>
        <location evidence="2">Cell membrane</location>
    </subcellularLocation>
    <subcellularLocation>
        <location evidence="2">Nucleus</location>
    </subcellularLocation>
    <text evidence="2 6">Recruited by BCL11A into the nuclear body (PubMed:18681895). In the presence of ZFHX3, sequesterd to nuclear body (NB)-like dots in the nucleus some of which overlap or closely associate with PML body (By similarity).</text>
</comment>
<comment type="tissue specificity">
    <text>Ubiquitous.</text>
</comment>
<comment type="developmental stage">
    <text evidence="5">Expressed at 13.5 dpc strongly in the upper lip, primary palate and medial edge epithelia of the secondary palate. At 14.5 dpc expression could be seen in the medial edge epithelial seam.</text>
</comment>
<comment type="induction">
    <text evidence="4">By hypoxia.</text>
</comment>
<comment type="PTM">
    <text evidence="2">Cleavage of precursor form by SENP1 or SENP2 is necessary for function.</text>
</comment>
<comment type="PTM">
    <text evidence="2">Polymeric SUMO1 chains undergo polyubiquitination by RNF4.</text>
</comment>
<comment type="similarity">
    <text evidence="8">Belongs to the ubiquitin family. SUMO subfamily.</text>
</comment>